<comment type="function">
    <text evidence="1">Transfers and isomerizes the ribose moiety from AdoMet to the 7-aminomethyl group of 7-deazaguanine (preQ1-tRNA) to give epoxyqueuosine (oQ-tRNA).</text>
</comment>
<comment type="catalytic activity">
    <reaction evidence="1">
        <text>7-aminomethyl-7-carbaguanosine(34) in tRNA + S-adenosyl-L-methionine = epoxyqueuosine(34) in tRNA + adenine + L-methionine + 2 H(+)</text>
        <dbReference type="Rhea" id="RHEA:32155"/>
        <dbReference type="Rhea" id="RHEA-COMP:10342"/>
        <dbReference type="Rhea" id="RHEA-COMP:18582"/>
        <dbReference type="ChEBI" id="CHEBI:15378"/>
        <dbReference type="ChEBI" id="CHEBI:16708"/>
        <dbReference type="ChEBI" id="CHEBI:57844"/>
        <dbReference type="ChEBI" id="CHEBI:59789"/>
        <dbReference type="ChEBI" id="CHEBI:82833"/>
        <dbReference type="ChEBI" id="CHEBI:194443"/>
        <dbReference type="EC" id="2.4.99.17"/>
    </reaction>
</comment>
<comment type="pathway">
    <text evidence="1">tRNA modification; tRNA-queuosine biosynthesis.</text>
</comment>
<comment type="subunit">
    <text evidence="1">Monomer.</text>
</comment>
<comment type="subcellular location">
    <subcellularLocation>
        <location evidence="1">Cytoplasm</location>
    </subcellularLocation>
</comment>
<comment type="similarity">
    <text evidence="1">Belongs to the QueA family.</text>
</comment>
<accession>Q8ZC32</accession>
<accession>Q0WC91</accession>
<proteinExistence type="inferred from homology"/>
<reference key="1">
    <citation type="journal article" date="2001" name="Nature">
        <title>Genome sequence of Yersinia pestis, the causative agent of plague.</title>
        <authorList>
            <person name="Parkhill J."/>
            <person name="Wren B.W."/>
            <person name="Thomson N.R."/>
            <person name="Titball R.W."/>
            <person name="Holden M.T.G."/>
            <person name="Prentice M.B."/>
            <person name="Sebaihia M."/>
            <person name="James K.D."/>
            <person name="Churcher C.M."/>
            <person name="Mungall K.L."/>
            <person name="Baker S."/>
            <person name="Basham D."/>
            <person name="Bentley S.D."/>
            <person name="Brooks K."/>
            <person name="Cerdeno-Tarraga A.-M."/>
            <person name="Chillingworth T."/>
            <person name="Cronin A."/>
            <person name="Davies R.M."/>
            <person name="Davis P."/>
            <person name="Dougan G."/>
            <person name="Feltwell T."/>
            <person name="Hamlin N."/>
            <person name="Holroyd S."/>
            <person name="Jagels K."/>
            <person name="Karlyshev A.V."/>
            <person name="Leather S."/>
            <person name="Moule S."/>
            <person name="Oyston P.C.F."/>
            <person name="Quail M.A."/>
            <person name="Rutherford K.M."/>
            <person name="Simmonds M."/>
            <person name="Skelton J."/>
            <person name="Stevens K."/>
            <person name="Whitehead S."/>
            <person name="Barrell B.G."/>
        </authorList>
    </citation>
    <scope>NUCLEOTIDE SEQUENCE [LARGE SCALE GENOMIC DNA]</scope>
    <source>
        <strain>CO-92 / Biovar Orientalis</strain>
    </source>
</reference>
<reference key="2">
    <citation type="journal article" date="2002" name="J. Bacteriol.">
        <title>Genome sequence of Yersinia pestis KIM.</title>
        <authorList>
            <person name="Deng W."/>
            <person name="Burland V."/>
            <person name="Plunkett G. III"/>
            <person name="Boutin A."/>
            <person name="Mayhew G.F."/>
            <person name="Liss P."/>
            <person name="Perna N.T."/>
            <person name="Rose D.J."/>
            <person name="Mau B."/>
            <person name="Zhou S."/>
            <person name="Schwartz D.C."/>
            <person name="Fetherston J.D."/>
            <person name="Lindler L.E."/>
            <person name="Brubaker R.R."/>
            <person name="Plano G.V."/>
            <person name="Straley S.C."/>
            <person name="McDonough K.A."/>
            <person name="Nilles M.L."/>
            <person name="Matson J.S."/>
            <person name="Blattner F.R."/>
            <person name="Perry R.D."/>
        </authorList>
    </citation>
    <scope>NUCLEOTIDE SEQUENCE [LARGE SCALE GENOMIC DNA]</scope>
    <source>
        <strain>KIM10+ / Biovar Mediaevalis</strain>
    </source>
</reference>
<reference key="3">
    <citation type="journal article" date="2004" name="DNA Res.">
        <title>Complete genome sequence of Yersinia pestis strain 91001, an isolate avirulent to humans.</title>
        <authorList>
            <person name="Song Y."/>
            <person name="Tong Z."/>
            <person name="Wang J."/>
            <person name="Wang L."/>
            <person name="Guo Z."/>
            <person name="Han Y."/>
            <person name="Zhang J."/>
            <person name="Pei D."/>
            <person name="Zhou D."/>
            <person name="Qin H."/>
            <person name="Pang X."/>
            <person name="Han Y."/>
            <person name="Zhai J."/>
            <person name="Li M."/>
            <person name="Cui B."/>
            <person name="Qi Z."/>
            <person name="Jin L."/>
            <person name="Dai R."/>
            <person name="Chen F."/>
            <person name="Li S."/>
            <person name="Ye C."/>
            <person name="Du Z."/>
            <person name="Lin W."/>
            <person name="Wang J."/>
            <person name="Yu J."/>
            <person name="Yang H."/>
            <person name="Wang J."/>
            <person name="Huang P."/>
            <person name="Yang R."/>
        </authorList>
    </citation>
    <scope>NUCLEOTIDE SEQUENCE [LARGE SCALE GENOMIC DNA]</scope>
    <source>
        <strain>91001 / Biovar Mediaevalis</strain>
    </source>
</reference>
<protein>
    <recommendedName>
        <fullName evidence="1">S-adenosylmethionine:tRNA ribosyltransferase-isomerase</fullName>
        <ecNumber evidence="1">2.4.99.17</ecNumber>
    </recommendedName>
    <alternativeName>
        <fullName evidence="1">Queuosine biosynthesis protein QueA</fullName>
    </alternativeName>
</protein>
<gene>
    <name evidence="1" type="primary">queA</name>
    <name type="ordered locus">YPO3192</name>
    <name type="ordered locus">y0990</name>
    <name type="ordered locus">YP_0739</name>
</gene>
<name>QUEA_YERPE</name>
<evidence type="ECO:0000255" key="1">
    <source>
        <dbReference type="HAMAP-Rule" id="MF_00113"/>
    </source>
</evidence>
<keyword id="KW-0963">Cytoplasm</keyword>
<keyword id="KW-0671">Queuosine biosynthesis</keyword>
<keyword id="KW-1185">Reference proteome</keyword>
<keyword id="KW-0949">S-adenosyl-L-methionine</keyword>
<keyword id="KW-0808">Transferase</keyword>
<sequence>MRVADFSFELPEALIAHYPQPQRSGCRLLSLDGPTGTLTHGIFTDLLDKLAPGDLLVFNNTRVIPARLFGRKASGGKLEVLVERVLDDHRVLAHVKASKAPKPGAELLLGDDESIRATMLARHDTLFELRFDDERDVFTILNAVGHMPLPPYIDRPDEDADRELYQTVYSQRPGAVAAPTAGLHFDEPMLAALQEKGIEMAFVTLHVGAGTFQPVRVDTIEDHIMHSEYAEVPQEVVDAVLACKARGKRVVAVGTTSVRSLESAAKAAENGLIAPFFGDTRIFIYPGYHYQVVDALVTNFHLPESTLIMLVSAFAGYKNTMNAYQQAVAEQYRFFSYGDAMFISRNPRAPQEKVSP</sequence>
<dbReference type="EC" id="2.4.99.17" evidence="1"/>
<dbReference type="EMBL" id="AL590842">
    <property type="protein sequence ID" value="CAL21787.1"/>
    <property type="molecule type" value="Genomic_DNA"/>
</dbReference>
<dbReference type="EMBL" id="AE009952">
    <property type="protein sequence ID" value="AAM84571.1"/>
    <property type="molecule type" value="Genomic_DNA"/>
</dbReference>
<dbReference type="EMBL" id="AE017042">
    <property type="protein sequence ID" value="AAS61004.1"/>
    <property type="molecule type" value="Genomic_DNA"/>
</dbReference>
<dbReference type="PIR" id="AH0387">
    <property type="entry name" value="AH0387"/>
</dbReference>
<dbReference type="RefSeq" id="WP_002208673.1">
    <property type="nucleotide sequence ID" value="NZ_WUCM01000079.1"/>
</dbReference>
<dbReference type="RefSeq" id="YP_002348097.1">
    <property type="nucleotide sequence ID" value="NC_003143.1"/>
</dbReference>
<dbReference type="SMR" id="Q8ZC32"/>
<dbReference type="IntAct" id="Q8ZC32">
    <property type="interactions" value="5"/>
</dbReference>
<dbReference type="STRING" id="214092.YPO3192"/>
<dbReference type="PaxDb" id="214092-YPO3192"/>
<dbReference type="DNASU" id="1145937"/>
<dbReference type="EnsemblBacteria" id="AAS61004">
    <property type="protein sequence ID" value="AAS61004"/>
    <property type="gene ID" value="YP_0739"/>
</dbReference>
<dbReference type="GeneID" id="57975521"/>
<dbReference type="KEGG" id="ype:YPO3192"/>
<dbReference type="KEGG" id="ypk:y0990"/>
<dbReference type="KEGG" id="ypm:YP_0739"/>
<dbReference type="PATRIC" id="fig|214092.21.peg.3648"/>
<dbReference type="eggNOG" id="COG0809">
    <property type="taxonomic scope" value="Bacteria"/>
</dbReference>
<dbReference type="HOGENOM" id="CLU_039110_1_0_6"/>
<dbReference type="OMA" id="YSYGDGM"/>
<dbReference type="OrthoDB" id="9805933at2"/>
<dbReference type="UniPathway" id="UPA00392"/>
<dbReference type="Proteomes" id="UP000000815">
    <property type="component" value="Chromosome"/>
</dbReference>
<dbReference type="Proteomes" id="UP000001019">
    <property type="component" value="Chromosome"/>
</dbReference>
<dbReference type="Proteomes" id="UP000002490">
    <property type="component" value="Chromosome"/>
</dbReference>
<dbReference type="GO" id="GO:0005737">
    <property type="term" value="C:cytoplasm"/>
    <property type="evidence" value="ECO:0007669"/>
    <property type="project" value="UniProtKB-SubCell"/>
</dbReference>
<dbReference type="GO" id="GO:0051075">
    <property type="term" value="F:S-adenosylmethionine:tRNA ribosyltransferase-isomerase activity"/>
    <property type="evidence" value="ECO:0000318"/>
    <property type="project" value="GO_Central"/>
</dbReference>
<dbReference type="GO" id="GO:0008616">
    <property type="term" value="P:queuosine biosynthetic process"/>
    <property type="evidence" value="ECO:0000318"/>
    <property type="project" value="GO_Central"/>
</dbReference>
<dbReference type="GO" id="GO:0002099">
    <property type="term" value="P:tRNA wobble guanine modification"/>
    <property type="evidence" value="ECO:0000318"/>
    <property type="project" value="GO_Central"/>
</dbReference>
<dbReference type="FunFam" id="2.40.10.240:FF:000001">
    <property type="entry name" value="S-adenosylmethionine:tRNA ribosyltransferase-isomerase"/>
    <property type="match status" value="1"/>
</dbReference>
<dbReference type="FunFam" id="3.40.1780.10:FF:000001">
    <property type="entry name" value="S-adenosylmethionine:tRNA ribosyltransferase-isomerase"/>
    <property type="match status" value="1"/>
</dbReference>
<dbReference type="Gene3D" id="2.40.10.240">
    <property type="entry name" value="QueA-like"/>
    <property type="match status" value="1"/>
</dbReference>
<dbReference type="Gene3D" id="3.40.1780.10">
    <property type="entry name" value="QueA-like"/>
    <property type="match status" value="1"/>
</dbReference>
<dbReference type="HAMAP" id="MF_00113">
    <property type="entry name" value="QueA"/>
    <property type="match status" value="1"/>
</dbReference>
<dbReference type="InterPro" id="IPR003699">
    <property type="entry name" value="QueA"/>
</dbReference>
<dbReference type="InterPro" id="IPR042118">
    <property type="entry name" value="QueA_dom1"/>
</dbReference>
<dbReference type="InterPro" id="IPR042119">
    <property type="entry name" value="QueA_dom2"/>
</dbReference>
<dbReference type="InterPro" id="IPR036100">
    <property type="entry name" value="QueA_sf"/>
</dbReference>
<dbReference type="NCBIfam" id="NF001140">
    <property type="entry name" value="PRK00147.1"/>
    <property type="match status" value="1"/>
</dbReference>
<dbReference type="NCBIfam" id="TIGR00113">
    <property type="entry name" value="queA"/>
    <property type="match status" value="1"/>
</dbReference>
<dbReference type="PANTHER" id="PTHR30307">
    <property type="entry name" value="S-ADENOSYLMETHIONINE:TRNA RIBOSYLTRANSFERASE-ISOMERASE"/>
    <property type="match status" value="1"/>
</dbReference>
<dbReference type="PANTHER" id="PTHR30307:SF0">
    <property type="entry name" value="S-ADENOSYLMETHIONINE:TRNA RIBOSYLTRANSFERASE-ISOMERASE"/>
    <property type="match status" value="1"/>
</dbReference>
<dbReference type="Pfam" id="PF02547">
    <property type="entry name" value="Queuosine_synth"/>
    <property type="match status" value="1"/>
</dbReference>
<dbReference type="SUPFAM" id="SSF111337">
    <property type="entry name" value="QueA-like"/>
    <property type="match status" value="1"/>
</dbReference>
<feature type="chain" id="PRO_0000165468" description="S-adenosylmethionine:tRNA ribosyltransferase-isomerase">
    <location>
        <begin position="1"/>
        <end position="356"/>
    </location>
</feature>
<organism>
    <name type="scientific">Yersinia pestis</name>
    <dbReference type="NCBI Taxonomy" id="632"/>
    <lineage>
        <taxon>Bacteria</taxon>
        <taxon>Pseudomonadati</taxon>
        <taxon>Pseudomonadota</taxon>
        <taxon>Gammaproteobacteria</taxon>
        <taxon>Enterobacterales</taxon>
        <taxon>Yersiniaceae</taxon>
        <taxon>Yersinia</taxon>
    </lineage>
</organism>